<feature type="chain" id="PRO_1000192583" description="Ribosomal protein L11 methyltransferase">
    <location>
        <begin position="1"/>
        <end position="312"/>
    </location>
</feature>
<feature type="binding site" evidence="1">
    <location>
        <position position="162"/>
    </location>
    <ligand>
        <name>S-adenosyl-L-methionine</name>
        <dbReference type="ChEBI" id="CHEBI:59789"/>
    </ligand>
</feature>
<feature type="binding site" evidence="1">
    <location>
        <position position="183"/>
    </location>
    <ligand>
        <name>S-adenosyl-L-methionine</name>
        <dbReference type="ChEBI" id="CHEBI:59789"/>
    </ligand>
</feature>
<feature type="binding site" evidence="1">
    <location>
        <position position="205"/>
    </location>
    <ligand>
        <name>S-adenosyl-L-methionine</name>
        <dbReference type="ChEBI" id="CHEBI:59789"/>
    </ligand>
</feature>
<feature type="binding site" evidence="1">
    <location>
        <position position="248"/>
    </location>
    <ligand>
        <name>S-adenosyl-L-methionine</name>
        <dbReference type="ChEBI" id="CHEBI:59789"/>
    </ligand>
</feature>
<gene>
    <name evidence="1" type="primary">prmA</name>
    <name type="ordered locus">BCG9842_B0805</name>
</gene>
<sequence>MKWSEISIHTTEEAVEAVSHILHEAGASGVAIEDPAELTKEREQQYGEIYALNPDEYPAEGVLIKAYFPQTDSLHETIAGVKSSIDVLPSYDIEIGTGNITVNEVNEEDWATAWKKYYHPVQISDTFTIVPTWEEYTPSSPDEKIIELDPGMAFGTGTHPTTTMCIRALEKTVQPGDAIIDVGTGSGVLSIAAAKLGASSVQAYDLDPVAVESAEMNVRLNKTDDIVSVGQNSLLEGIEGPVDLIVANLLAEIILLFPEDAARVVKSGGLFITSGIIAAKEKVISEALEQAGFTIEEVLRMEDWVAIIARNA</sequence>
<comment type="function">
    <text evidence="1">Methylates ribosomal protein L11.</text>
</comment>
<comment type="catalytic activity">
    <reaction evidence="1">
        <text>L-lysyl-[protein] + 3 S-adenosyl-L-methionine = N(6),N(6),N(6)-trimethyl-L-lysyl-[protein] + 3 S-adenosyl-L-homocysteine + 3 H(+)</text>
        <dbReference type="Rhea" id="RHEA:54192"/>
        <dbReference type="Rhea" id="RHEA-COMP:9752"/>
        <dbReference type="Rhea" id="RHEA-COMP:13826"/>
        <dbReference type="ChEBI" id="CHEBI:15378"/>
        <dbReference type="ChEBI" id="CHEBI:29969"/>
        <dbReference type="ChEBI" id="CHEBI:57856"/>
        <dbReference type="ChEBI" id="CHEBI:59789"/>
        <dbReference type="ChEBI" id="CHEBI:61961"/>
    </reaction>
</comment>
<comment type="subcellular location">
    <subcellularLocation>
        <location evidence="1">Cytoplasm</location>
    </subcellularLocation>
</comment>
<comment type="similarity">
    <text evidence="1">Belongs to the methyltransferase superfamily. PrmA family.</text>
</comment>
<reference key="1">
    <citation type="submission" date="2008-10" db="EMBL/GenBank/DDBJ databases">
        <title>Genome sequence of Bacillus cereus G9842.</title>
        <authorList>
            <person name="Dodson R.J."/>
            <person name="Durkin A.S."/>
            <person name="Rosovitz M.J."/>
            <person name="Rasko D.A."/>
            <person name="Hoffmaster A."/>
            <person name="Ravel J."/>
            <person name="Sutton G."/>
        </authorList>
    </citation>
    <scope>NUCLEOTIDE SEQUENCE [LARGE SCALE GENOMIC DNA]</scope>
    <source>
        <strain>G9842</strain>
    </source>
</reference>
<dbReference type="EC" id="2.1.1.-" evidence="1"/>
<dbReference type="EMBL" id="CP001186">
    <property type="protein sequence ID" value="ACK95861.1"/>
    <property type="molecule type" value="Genomic_DNA"/>
</dbReference>
<dbReference type="RefSeq" id="WP_000872098.1">
    <property type="nucleotide sequence ID" value="NC_011772.1"/>
</dbReference>
<dbReference type="SMR" id="B7IYG5"/>
<dbReference type="KEGG" id="bcg:BCG9842_B0805"/>
<dbReference type="HOGENOM" id="CLU_049382_0_1_9"/>
<dbReference type="Proteomes" id="UP000006744">
    <property type="component" value="Chromosome"/>
</dbReference>
<dbReference type="GO" id="GO:0005737">
    <property type="term" value="C:cytoplasm"/>
    <property type="evidence" value="ECO:0007669"/>
    <property type="project" value="UniProtKB-SubCell"/>
</dbReference>
<dbReference type="GO" id="GO:0016279">
    <property type="term" value="F:protein-lysine N-methyltransferase activity"/>
    <property type="evidence" value="ECO:0007669"/>
    <property type="project" value="RHEA"/>
</dbReference>
<dbReference type="GO" id="GO:0032259">
    <property type="term" value="P:methylation"/>
    <property type="evidence" value="ECO:0007669"/>
    <property type="project" value="UniProtKB-KW"/>
</dbReference>
<dbReference type="CDD" id="cd02440">
    <property type="entry name" value="AdoMet_MTases"/>
    <property type="match status" value="1"/>
</dbReference>
<dbReference type="Gene3D" id="3.40.50.150">
    <property type="entry name" value="Vaccinia Virus protein VP39"/>
    <property type="match status" value="1"/>
</dbReference>
<dbReference type="HAMAP" id="MF_00735">
    <property type="entry name" value="Methyltr_PrmA"/>
    <property type="match status" value="1"/>
</dbReference>
<dbReference type="InterPro" id="IPR050078">
    <property type="entry name" value="Ribosomal_L11_MeTrfase_PrmA"/>
</dbReference>
<dbReference type="InterPro" id="IPR004498">
    <property type="entry name" value="Ribosomal_PrmA_MeTrfase"/>
</dbReference>
<dbReference type="InterPro" id="IPR029063">
    <property type="entry name" value="SAM-dependent_MTases_sf"/>
</dbReference>
<dbReference type="NCBIfam" id="TIGR00406">
    <property type="entry name" value="prmA"/>
    <property type="match status" value="1"/>
</dbReference>
<dbReference type="PANTHER" id="PTHR43648">
    <property type="entry name" value="ELECTRON TRANSFER FLAVOPROTEIN BETA SUBUNIT LYSINE METHYLTRANSFERASE"/>
    <property type="match status" value="1"/>
</dbReference>
<dbReference type="PANTHER" id="PTHR43648:SF1">
    <property type="entry name" value="ELECTRON TRANSFER FLAVOPROTEIN BETA SUBUNIT LYSINE METHYLTRANSFERASE"/>
    <property type="match status" value="1"/>
</dbReference>
<dbReference type="Pfam" id="PF06325">
    <property type="entry name" value="PrmA"/>
    <property type="match status" value="1"/>
</dbReference>
<dbReference type="PIRSF" id="PIRSF000401">
    <property type="entry name" value="RPL11_MTase"/>
    <property type="match status" value="1"/>
</dbReference>
<dbReference type="SUPFAM" id="SSF53335">
    <property type="entry name" value="S-adenosyl-L-methionine-dependent methyltransferases"/>
    <property type="match status" value="1"/>
</dbReference>
<proteinExistence type="inferred from homology"/>
<name>PRMA_BACC2</name>
<evidence type="ECO:0000255" key="1">
    <source>
        <dbReference type="HAMAP-Rule" id="MF_00735"/>
    </source>
</evidence>
<keyword id="KW-0963">Cytoplasm</keyword>
<keyword id="KW-0489">Methyltransferase</keyword>
<keyword id="KW-0949">S-adenosyl-L-methionine</keyword>
<keyword id="KW-0808">Transferase</keyword>
<accession>B7IYG5</accession>
<organism>
    <name type="scientific">Bacillus cereus (strain G9842)</name>
    <dbReference type="NCBI Taxonomy" id="405531"/>
    <lineage>
        <taxon>Bacteria</taxon>
        <taxon>Bacillati</taxon>
        <taxon>Bacillota</taxon>
        <taxon>Bacilli</taxon>
        <taxon>Bacillales</taxon>
        <taxon>Bacillaceae</taxon>
        <taxon>Bacillus</taxon>
        <taxon>Bacillus cereus group</taxon>
    </lineage>
</organism>
<protein>
    <recommendedName>
        <fullName evidence="1">Ribosomal protein L11 methyltransferase</fullName>
        <shortName evidence="1">L11 Mtase</shortName>
        <ecNumber evidence="1">2.1.1.-</ecNumber>
    </recommendedName>
</protein>